<comment type="function">
    <text evidence="1">Plays a role in cell envelope biogenesis, maintenance of cell envelope integrity and membrane homeostasis.</text>
</comment>
<comment type="subcellular location">
    <subcellularLocation>
        <location evidence="1">Cell inner membrane</location>
        <topology evidence="1">Multi-pass membrane protein</topology>
    </subcellularLocation>
</comment>
<comment type="similarity">
    <text evidence="1">Belongs to the YciB family.</text>
</comment>
<feature type="chain" id="PRO_1000021062" description="Inner membrane-spanning protein YciB">
    <location>
        <begin position="1"/>
        <end position="181"/>
    </location>
</feature>
<feature type="transmembrane region" description="Helical" evidence="1">
    <location>
        <begin position="10"/>
        <end position="30"/>
    </location>
</feature>
<feature type="transmembrane region" description="Helical" evidence="1">
    <location>
        <begin position="50"/>
        <end position="70"/>
    </location>
</feature>
<feature type="transmembrane region" description="Helical" evidence="1">
    <location>
        <begin position="72"/>
        <end position="92"/>
    </location>
</feature>
<feature type="transmembrane region" description="Helical" evidence="1">
    <location>
        <begin position="118"/>
        <end position="138"/>
    </location>
</feature>
<feature type="transmembrane region" description="Helical" evidence="1">
    <location>
        <begin position="148"/>
        <end position="168"/>
    </location>
</feature>
<name>YCIB_SHESR</name>
<proteinExistence type="inferred from homology"/>
<protein>
    <recommendedName>
        <fullName evidence="1">Inner membrane-spanning protein YciB</fullName>
    </recommendedName>
</protein>
<keyword id="KW-0997">Cell inner membrane</keyword>
<keyword id="KW-1003">Cell membrane</keyword>
<keyword id="KW-0472">Membrane</keyword>
<keyword id="KW-0812">Transmembrane</keyword>
<keyword id="KW-1133">Transmembrane helix</keyword>
<gene>
    <name evidence="1" type="primary">yciB</name>
    <name type="ordered locus">Shewmr7_1515</name>
</gene>
<sequence>MKQLLDFLPLIIFFAVYKFFDIYIASGALIAATALQLVVTYALYKKLEKMHLITFAMVTVFGTLTLVFHDDAFIKWKVTIIYALFALALGVSQLLNKSILKSMLGKEMKVADNIWAHVTWYWVSFFAICGLVNIYVAFRLPLETWVNFKVFGLTALTLINTVITVFYLYKHLPEDQRKELK</sequence>
<evidence type="ECO:0000255" key="1">
    <source>
        <dbReference type="HAMAP-Rule" id="MF_00189"/>
    </source>
</evidence>
<dbReference type="EMBL" id="CP000444">
    <property type="protein sequence ID" value="ABI42513.1"/>
    <property type="molecule type" value="Genomic_DNA"/>
</dbReference>
<dbReference type="KEGG" id="shm:Shewmr7_1515"/>
<dbReference type="HOGENOM" id="CLU_089554_2_0_6"/>
<dbReference type="GO" id="GO:0005886">
    <property type="term" value="C:plasma membrane"/>
    <property type="evidence" value="ECO:0007669"/>
    <property type="project" value="UniProtKB-SubCell"/>
</dbReference>
<dbReference type="HAMAP" id="MF_00189">
    <property type="entry name" value="YciB"/>
    <property type="match status" value="1"/>
</dbReference>
<dbReference type="InterPro" id="IPR006008">
    <property type="entry name" value="YciB"/>
</dbReference>
<dbReference type="NCBIfam" id="TIGR00997">
    <property type="entry name" value="ispZ"/>
    <property type="match status" value="1"/>
</dbReference>
<dbReference type="NCBIfam" id="NF001324">
    <property type="entry name" value="PRK00259.1-2"/>
    <property type="match status" value="1"/>
</dbReference>
<dbReference type="NCBIfam" id="NF001325">
    <property type="entry name" value="PRK00259.1-3"/>
    <property type="match status" value="1"/>
</dbReference>
<dbReference type="PANTHER" id="PTHR36917:SF1">
    <property type="entry name" value="INNER MEMBRANE-SPANNING PROTEIN YCIB"/>
    <property type="match status" value="1"/>
</dbReference>
<dbReference type="PANTHER" id="PTHR36917">
    <property type="entry name" value="INTRACELLULAR SEPTATION PROTEIN A-RELATED"/>
    <property type="match status" value="1"/>
</dbReference>
<dbReference type="Pfam" id="PF04279">
    <property type="entry name" value="IspA"/>
    <property type="match status" value="1"/>
</dbReference>
<organism>
    <name type="scientific">Shewanella sp. (strain MR-7)</name>
    <dbReference type="NCBI Taxonomy" id="60481"/>
    <lineage>
        <taxon>Bacteria</taxon>
        <taxon>Pseudomonadati</taxon>
        <taxon>Pseudomonadota</taxon>
        <taxon>Gammaproteobacteria</taxon>
        <taxon>Alteromonadales</taxon>
        <taxon>Shewanellaceae</taxon>
        <taxon>Shewanella</taxon>
    </lineage>
</organism>
<reference key="1">
    <citation type="submission" date="2006-08" db="EMBL/GenBank/DDBJ databases">
        <title>Complete sequence of chromosome 1 of Shewanella sp. MR-7.</title>
        <authorList>
            <person name="Copeland A."/>
            <person name="Lucas S."/>
            <person name="Lapidus A."/>
            <person name="Barry K."/>
            <person name="Detter J.C."/>
            <person name="Glavina del Rio T."/>
            <person name="Hammon N."/>
            <person name="Israni S."/>
            <person name="Dalin E."/>
            <person name="Tice H."/>
            <person name="Pitluck S."/>
            <person name="Kiss H."/>
            <person name="Brettin T."/>
            <person name="Bruce D."/>
            <person name="Han C."/>
            <person name="Tapia R."/>
            <person name="Gilna P."/>
            <person name="Schmutz J."/>
            <person name="Larimer F."/>
            <person name="Land M."/>
            <person name="Hauser L."/>
            <person name="Kyrpides N."/>
            <person name="Mikhailova N."/>
            <person name="Nealson K."/>
            <person name="Konstantinidis K."/>
            <person name="Klappenbach J."/>
            <person name="Tiedje J."/>
            <person name="Richardson P."/>
        </authorList>
    </citation>
    <scope>NUCLEOTIDE SEQUENCE [LARGE SCALE GENOMIC DNA]</scope>
    <source>
        <strain>MR-7</strain>
    </source>
</reference>
<accession>Q0HWJ2</accession>